<dbReference type="EC" id="3.-.-.-" evidence="1"/>
<dbReference type="EMBL" id="Z18946">
    <property type="protein sequence ID" value="CAA79386.1"/>
    <property type="molecule type" value="Genomic_DNA"/>
</dbReference>
<dbReference type="PIR" id="S30955">
    <property type="entry name" value="S30955"/>
</dbReference>
<dbReference type="RefSeq" id="NP_039674.1">
    <property type="nucleotide sequence ID" value="NC_001335.1"/>
</dbReference>
<dbReference type="SMR" id="Q05285"/>
<dbReference type="GeneID" id="2942936"/>
<dbReference type="KEGG" id="vg:2942936"/>
<dbReference type="OrthoDB" id="2438at10239"/>
<dbReference type="Proteomes" id="UP000002123">
    <property type="component" value="Genome"/>
</dbReference>
<dbReference type="GO" id="GO:0016787">
    <property type="term" value="F:hydrolase activity"/>
    <property type="evidence" value="ECO:0007669"/>
    <property type="project" value="UniProtKB-KW"/>
</dbReference>
<dbReference type="GO" id="GO:0042742">
    <property type="term" value="P:defense response to bacterium"/>
    <property type="evidence" value="ECO:0007669"/>
    <property type="project" value="UniProtKB-KW"/>
</dbReference>
<dbReference type="GO" id="GO:0031640">
    <property type="term" value="P:killing of cells of another organism"/>
    <property type="evidence" value="ECO:0007669"/>
    <property type="project" value="UniProtKB-KW"/>
</dbReference>
<proteinExistence type="inferred from homology"/>
<protein>
    <recommendedName>
        <fullName evidence="1">Endolysin A</fullName>
        <ecNumber evidence="1">3.-.-.-</ecNumber>
    </recommendedName>
    <alternativeName>
        <fullName evidence="2">Gene 10 protein</fullName>
    </alternativeName>
    <alternativeName>
        <fullName evidence="2">Gp10</fullName>
    </alternativeName>
    <alternativeName>
        <fullName evidence="2">Lysis protein</fullName>
    </alternativeName>
    <alternativeName>
        <fullName evidence="2">Lysozyme</fullName>
    </alternativeName>
</protein>
<name>ENLYS_BPML5</name>
<feature type="chain" id="PRO_0000164709" description="Endolysin A">
    <location>
        <begin position="1"/>
        <end position="292"/>
    </location>
</feature>
<evidence type="ECO:0000250" key="1">
    <source>
        <dbReference type="UniProtKB" id="O64203"/>
    </source>
</evidence>
<evidence type="ECO:0000305" key="2"/>
<sequence>MTFTVTRERAQWVHDMARARDGLPYAYGGAFTNNPRVSTDCSGLVLQTGAWYGGRTDWVGNRYGSTESFRLDHKIVYDLGFKRMPRGGPAALPIKPVMLVGLQHGGGGVYSHTACTLMTMDHPGGPVKMSDRGVDWESHGNRNGVGVELYEGARAWNDPLFHDFWYLDAVLEDEGDDDELADPVLGKMIREIHACLFNQTASTSDLATPGEGAIWQLHQKIHSIDGMLHPIHAERRARAGDLGELHRIVLAAKGLGVKRDEVTKRVYQSILADIERDNPEVLQRYIAERGGL</sequence>
<organism>
    <name type="scientific">Mycobacterium phage L5</name>
    <name type="common">Mycobacteriophage L5</name>
    <dbReference type="NCBI Taxonomy" id="31757"/>
    <lineage>
        <taxon>Viruses</taxon>
        <taxon>Duplodnaviria</taxon>
        <taxon>Heunggongvirae</taxon>
        <taxon>Uroviricota</taxon>
        <taxon>Caudoviricetes</taxon>
        <taxon>Fromanvirus</taxon>
    </lineage>
</organism>
<accession>Q05285</accession>
<gene>
    <name type="primary">10</name>
</gene>
<comment type="function">
    <text evidence="1">Endolysin that degrades host peptidoglycans and participates with the holin protein in the sequential events which lead to the programmed host cell lysis releasing the mature viral particles. Once the holin has permeabilized the host cell membrane, the endolysin can reach the periplasm and break down the peptidoglycan layer.</text>
</comment>
<comment type="similarity">
    <text evidence="2">Belongs to the L5likevirus endolysin A protein family.</text>
</comment>
<organismHost>
    <name type="scientific">Mycobacterium</name>
    <dbReference type="NCBI Taxonomy" id="1763"/>
</organismHost>
<keyword id="KW-0929">Antimicrobial</keyword>
<keyword id="KW-0081">Bacteriolytic enzyme</keyword>
<keyword id="KW-0204">Cytolysis</keyword>
<keyword id="KW-0578">Host cell lysis by virus</keyword>
<keyword id="KW-0378">Hydrolase</keyword>
<keyword id="KW-1185">Reference proteome</keyword>
<keyword id="KW-1188">Viral release from host cell</keyword>
<reference key="1">
    <citation type="journal article" date="1993" name="Mol. Microbiol.">
        <title>DNA sequence, structure and gene expression of mycobacteriophage L5: a phage system for mycobacterial genetics.</title>
        <authorList>
            <person name="Hatfull G.F."/>
            <person name="Sarkis G.J."/>
        </authorList>
    </citation>
    <scope>NUCLEOTIDE SEQUENCE [LARGE SCALE GENOMIC DNA]</scope>
</reference>